<reference key="1">
    <citation type="journal article" date="1998" name="Science">
        <title>Genome sequence of the nematode C. elegans: a platform for investigating biology.</title>
        <authorList>
            <consortium name="The C. elegans sequencing consortium"/>
        </authorList>
    </citation>
    <scope>NUCLEOTIDE SEQUENCE [LARGE SCALE GENOMIC DNA]</scope>
    <source>
        <strain>Bristol N2</strain>
    </source>
</reference>
<accession>O18175</accession>
<gene>
    <name type="primary">sre-33</name>
    <name type="ORF">W05H5.6</name>
</gene>
<dbReference type="EMBL" id="Z81139">
    <property type="protein sequence ID" value="CAB03481.2"/>
    <property type="molecule type" value="Genomic_DNA"/>
</dbReference>
<dbReference type="PIR" id="T26200">
    <property type="entry name" value="T26200"/>
</dbReference>
<dbReference type="RefSeq" id="NP_496649.2">
    <property type="nucleotide sequence ID" value="NM_064248.3"/>
</dbReference>
<dbReference type="BioGRID" id="53875">
    <property type="interactions" value="6"/>
</dbReference>
<dbReference type="FunCoup" id="O18175">
    <property type="interactions" value="1"/>
</dbReference>
<dbReference type="PaxDb" id="6239-W05H5.6"/>
<dbReference type="EnsemblMetazoa" id="W05H5.6.1">
    <property type="protein sequence ID" value="W05H5.6.1"/>
    <property type="gene ID" value="WBGene00012287"/>
</dbReference>
<dbReference type="GeneID" id="189226"/>
<dbReference type="KEGG" id="cel:CELE_W05H5.6"/>
<dbReference type="UCSC" id="W05H5.6">
    <property type="organism name" value="c. elegans"/>
</dbReference>
<dbReference type="AGR" id="WB:WBGene00012287"/>
<dbReference type="CTD" id="189226"/>
<dbReference type="WormBase" id="W05H5.6">
    <property type="protein sequence ID" value="CE38113"/>
    <property type="gene ID" value="WBGene00012287"/>
    <property type="gene designation" value="sre-33"/>
</dbReference>
<dbReference type="eggNOG" id="ENOG502TFCH">
    <property type="taxonomic scope" value="Eukaryota"/>
</dbReference>
<dbReference type="GeneTree" id="ENSGT01130000278788"/>
<dbReference type="HOGENOM" id="CLU_063305_1_0_1"/>
<dbReference type="InParanoid" id="O18175"/>
<dbReference type="OrthoDB" id="5849192at2759"/>
<dbReference type="PhylomeDB" id="O18175"/>
<dbReference type="PRO" id="PR:O18175"/>
<dbReference type="Proteomes" id="UP000001940">
    <property type="component" value="Chromosome II"/>
</dbReference>
<dbReference type="GO" id="GO:0016020">
    <property type="term" value="C:membrane"/>
    <property type="evidence" value="ECO:0007669"/>
    <property type="project" value="UniProtKB-SubCell"/>
</dbReference>
<dbReference type="GO" id="GO:0007606">
    <property type="term" value="P:sensory perception of chemical stimulus"/>
    <property type="evidence" value="ECO:0007669"/>
    <property type="project" value="InterPro"/>
</dbReference>
<dbReference type="InterPro" id="IPR004151">
    <property type="entry name" value="7TM_GPCR_serpentine_rcpt_Sre"/>
</dbReference>
<dbReference type="PANTHER" id="PTHR23128">
    <property type="entry name" value="SERPENTINE RECEPTOR, CLASS E (EPSILON)-RELATED"/>
    <property type="match status" value="1"/>
</dbReference>
<dbReference type="PANTHER" id="PTHR23128:SF60">
    <property type="entry name" value="SERPENTINE RECEPTOR, CLASS E (EPSILON)-RELATED"/>
    <property type="match status" value="1"/>
</dbReference>
<dbReference type="Pfam" id="PF03125">
    <property type="entry name" value="Sre"/>
    <property type="match status" value="1"/>
</dbReference>
<feature type="chain" id="PRO_0000104547" description="Serpentine receptor class epsilon-33">
    <location>
        <begin position="1"/>
        <end position="359"/>
    </location>
</feature>
<feature type="transmembrane region" description="Helical" evidence="1">
    <location>
        <begin position="29"/>
        <end position="49"/>
    </location>
</feature>
<feature type="transmembrane region" description="Helical" evidence="1">
    <location>
        <begin position="65"/>
        <end position="85"/>
    </location>
</feature>
<feature type="transmembrane region" description="Helical" evidence="1">
    <location>
        <begin position="134"/>
        <end position="156"/>
    </location>
</feature>
<feature type="transmembrane region" description="Helical" evidence="1">
    <location>
        <begin position="168"/>
        <end position="188"/>
    </location>
</feature>
<feature type="transmembrane region" description="Helical" evidence="1">
    <location>
        <begin position="194"/>
        <end position="214"/>
    </location>
</feature>
<feature type="transmembrane region" description="Helical" evidence="1">
    <location>
        <begin position="255"/>
        <end position="275"/>
    </location>
</feature>
<feature type="transmembrane region" description="Helical" evidence="1">
    <location>
        <begin position="285"/>
        <end position="305"/>
    </location>
</feature>
<name>SRE33_CAEEL</name>
<organism>
    <name type="scientific">Caenorhabditis elegans</name>
    <dbReference type="NCBI Taxonomy" id="6239"/>
    <lineage>
        <taxon>Eukaryota</taxon>
        <taxon>Metazoa</taxon>
        <taxon>Ecdysozoa</taxon>
        <taxon>Nematoda</taxon>
        <taxon>Chromadorea</taxon>
        <taxon>Rhabditida</taxon>
        <taxon>Rhabditina</taxon>
        <taxon>Rhabditomorpha</taxon>
        <taxon>Rhabditoidea</taxon>
        <taxon>Rhabditidae</taxon>
        <taxon>Peloderinae</taxon>
        <taxon>Caenorhabditis</taxon>
    </lineage>
</organism>
<comment type="subcellular location">
    <subcellularLocation>
        <location evidence="2">Membrane</location>
        <topology evidence="2">Multi-pass membrane protein</topology>
    </subcellularLocation>
</comment>
<comment type="similarity">
    <text evidence="2">Belongs to the nematode receptor-like protein sre family.</text>
</comment>
<protein>
    <recommendedName>
        <fullName>Serpentine receptor class epsilon-33</fullName>
        <shortName>Protein sre-33</shortName>
    </recommendedName>
</protein>
<proteinExistence type="inferred from homology"/>
<sequence>MIINSNSSTIFSSIWLPVFFYVEPLDQQVIISILELMIYLVCIHLVNVSLHVALKIRLFHRNLYILALPMFGMWYELIIGKFITIAYRLKLLGLDFELGEHTAIWTNDPGKVLLVASLNGLELLIFGGFLQWHYMYSWIFGVLTVAVERVIASVLIENYESNTQNLMPAILLIISQFLSISMAFGLLFQKVGPLSAHFPWMISCPISVAAYVFVKKVNESFRREIKNPGRKRIFTLSQQFQVKENLRVLHLGTRLVFAVLSFIGICGCGIAALHYKIVPSYYCHLIENVLFLNPFLIGLTAMLSIPQWKEQFMKSFLTVRLFRNRRKPVHIVVEIEECAKKKNDVETNLYFKQLANSWI</sequence>
<evidence type="ECO:0000255" key="1"/>
<evidence type="ECO:0000305" key="2"/>
<keyword id="KW-0472">Membrane</keyword>
<keyword id="KW-1185">Reference proteome</keyword>
<keyword id="KW-0812">Transmembrane</keyword>
<keyword id="KW-1133">Transmembrane helix</keyword>